<gene>
    <name evidence="1" type="primary">murC</name>
    <name type="ordered locus">Mlg_2192</name>
</gene>
<accession>Q0A6K3</accession>
<keyword id="KW-0067">ATP-binding</keyword>
<keyword id="KW-0131">Cell cycle</keyword>
<keyword id="KW-0132">Cell division</keyword>
<keyword id="KW-0133">Cell shape</keyword>
<keyword id="KW-0961">Cell wall biogenesis/degradation</keyword>
<keyword id="KW-0963">Cytoplasm</keyword>
<keyword id="KW-0436">Ligase</keyword>
<keyword id="KW-0547">Nucleotide-binding</keyword>
<keyword id="KW-0573">Peptidoglycan synthesis</keyword>
<keyword id="KW-1185">Reference proteome</keyword>
<evidence type="ECO:0000255" key="1">
    <source>
        <dbReference type="HAMAP-Rule" id="MF_00046"/>
    </source>
</evidence>
<feature type="chain" id="PRO_0000336809" description="UDP-N-acetylmuramate--L-alanine ligase">
    <location>
        <begin position="1"/>
        <end position="479"/>
    </location>
</feature>
<feature type="binding site" evidence="1">
    <location>
        <begin position="126"/>
        <end position="132"/>
    </location>
    <ligand>
        <name>ATP</name>
        <dbReference type="ChEBI" id="CHEBI:30616"/>
    </ligand>
</feature>
<protein>
    <recommendedName>
        <fullName evidence="1">UDP-N-acetylmuramate--L-alanine ligase</fullName>
        <ecNumber evidence="1">6.3.2.8</ecNumber>
    </recommendedName>
    <alternativeName>
        <fullName evidence="1">UDP-N-acetylmuramoyl-L-alanine synthetase</fullName>
    </alternativeName>
</protein>
<proteinExistence type="inferred from homology"/>
<reference key="1">
    <citation type="submission" date="2006-08" db="EMBL/GenBank/DDBJ databases">
        <title>Complete sequence of Alkalilimnicola ehrilichei MLHE-1.</title>
        <authorList>
            <person name="Copeland A."/>
            <person name="Lucas S."/>
            <person name="Lapidus A."/>
            <person name="Barry K."/>
            <person name="Detter J.C."/>
            <person name="Glavina del Rio T."/>
            <person name="Hammon N."/>
            <person name="Israni S."/>
            <person name="Dalin E."/>
            <person name="Tice H."/>
            <person name="Pitluck S."/>
            <person name="Sims D."/>
            <person name="Brettin T."/>
            <person name="Bruce D."/>
            <person name="Han C."/>
            <person name="Tapia R."/>
            <person name="Gilna P."/>
            <person name="Schmutz J."/>
            <person name="Larimer F."/>
            <person name="Land M."/>
            <person name="Hauser L."/>
            <person name="Kyrpides N."/>
            <person name="Mikhailova N."/>
            <person name="Oremland R.S."/>
            <person name="Hoeft S.E."/>
            <person name="Switzer-Blum J."/>
            <person name="Kulp T."/>
            <person name="King G."/>
            <person name="Tabita R."/>
            <person name="Witte B."/>
            <person name="Santini J.M."/>
            <person name="Basu P."/>
            <person name="Hollibaugh J.T."/>
            <person name="Xie G."/>
            <person name="Stolz J.F."/>
            <person name="Richardson P."/>
        </authorList>
    </citation>
    <scope>NUCLEOTIDE SEQUENCE [LARGE SCALE GENOMIC DNA]</scope>
    <source>
        <strain>ATCC BAA-1101 / DSM 17681 / MLHE-1</strain>
    </source>
</reference>
<name>MURC_ALKEH</name>
<dbReference type="EC" id="6.3.2.8" evidence="1"/>
<dbReference type="EMBL" id="CP000453">
    <property type="protein sequence ID" value="ABI57534.1"/>
    <property type="molecule type" value="Genomic_DNA"/>
</dbReference>
<dbReference type="RefSeq" id="WP_011629928.1">
    <property type="nucleotide sequence ID" value="NC_008340.1"/>
</dbReference>
<dbReference type="SMR" id="Q0A6K3"/>
<dbReference type="KEGG" id="aeh:Mlg_2192"/>
<dbReference type="eggNOG" id="COG0773">
    <property type="taxonomic scope" value="Bacteria"/>
</dbReference>
<dbReference type="HOGENOM" id="CLU_028104_2_2_6"/>
<dbReference type="OrthoDB" id="9804126at2"/>
<dbReference type="UniPathway" id="UPA00219"/>
<dbReference type="Proteomes" id="UP000001962">
    <property type="component" value="Chromosome"/>
</dbReference>
<dbReference type="GO" id="GO:0005737">
    <property type="term" value="C:cytoplasm"/>
    <property type="evidence" value="ECO:0007669"/>
    <property type="project" value="UniProtKB-SubCell"/>
</dbReference>
<dbReference type="GO" id="GO:0005524">
    <property type="term" value="F:ATP binding"/>
    <property type="evidence" value="ECO:0007669"/>
    <property type="project" value="UniProtKB-UniRule"/>
</dbReference>
<dbReference type="GO" id="GO:0008763">
    <property type="term" value="F:UDP-N-acetylmuramate-L-alanine ligase activity"/>
    <property type="evidence" value="ECO:0007669"/>
    <property type="project" value="UniProtKB-UniRule"/>
</dbReference>
<dbReference type="GO" id="GO:0051301">
    <property type="term" value="P:cell division"/>
    <property type="evidence" value="ECO:0007669"/>
    <property type="project" value="UniProtKB-KW"/>
</dbReference>
<dbReference type="GO" id="GO:0071555">
    <property type="term" value="P:cell wall organization"/>
    <property type="evidence" value="ECO:0007669"/>
    <property type="project" value="UniProtKB-KW"/>
</dbReference>
<dbReference type="GO" id="GO:0009252">
    <property type="term" value="P:peptidoglycan biosynthetic process"/>
    <property type="evidence" value="ECO:0007669"/>
    <property type="project" value="UniProtKB-UniRule"/>
</dbReference>
<dbReference type="GO" id="GO:0008360">
    <property type="term" value="P:regulation of cell shape"/>
    <property type="evidence" value="ECO:0007669"/>
    <property type="project" value="UniProtKB-KW"/>
</dbReference>
<dbReference type="FunFam" id="3.40.1190.10:FF:000001">
    <property type="entry name" value="UDP-N-acetylmuramate--L-alanine ligase"/>
    <property type="match status" value="1"/>
</dbReference>
<dbReference type="Gene3D" id="3.90.190.20">
    <property type="entry name" value="Mur ligase, C-terminal domain"/>
    <property type="match status" value="1"/>
</dbReference>
<dbReference type="Gene3D" id="3.40.1190.10">
    <property type="entry name" value="Mur-like, catalytic domain"/>
    <property type="match status" value="1"/>
</dbReference>
<dbReference type="Gene3D" id="3.40.50.720">
    <property type="entry name" value="NAD(P)-binding Rossmann-like Domain"/>
    <property type="match status" value="1"/>
</dbReference>
<dbReference type="HAMAP" id="MF_00046">
    <property type="entry name" value="MurC"/>
    <property type="match status" value="1"/>
</dbReference>
<dbReference type="InterPro" id="IPR036565">
    <property type="entry name" value="Mur-like_cat_sf"/>
</dbReference>
<dbReference type="InterPro" id="IPR004101">
    <property type="entry name" value="Mur_ligase_C"/>
</dbReference>
<dbReference type="InterPro" id="IPR036615">
    <property type="entry name" value="Mur_ligase_C_dom_sf"/>
</dbReference>
<dbReference type="InterPro" id="IPR013221">
    <property type="entry name" value="Mur_ligase_cen"/>
</dbReference>
<dbReference type="InterPro" id="IPR000713">
    <property type="entry name" value="Mur_ligase_N"/>
</dbReference>
<dbReference type="InterPro" id="IPR050061">
    <property type="entry name" value="MurCDEF_pg_biosynth"/>
</dbReference>
<dbReference type="InterPro" id="IPR005758">
    <property type="entry name" value="UDP-N-AcMur_Ala_ligase_MurC"/>
</dbReference>
<dbReference type="NCBIfam" id="TIGR01082">
    <property type="entry name" value="murC"/>
    <property type="match status" value="1"/>
</dbReference>
<dbReference type="PANTHER" id="PTHR43445:SF3">
    <property type="entry name" value="UDP-N-ACETYLMURAMATE--L-ALANINE LIGASE"/>
    <property type="match status" value="1"/>
</dbReference>
<dbReference type="PANTHER" id="PTHR43445">
    <property type="entry name" value="UDP-N-ACETYLMURAMATE--L-ALANINE LIGASE-RELATED"/>
    <property type="match status" value="1"/>
</dbReference>
<dbReference type="Pfam" id="PF01225">
    <property type="entry name" value="Mur_ligase"/>
    <property type="match status" value="1"/>
</dbReference>
<dbReference type="Pfam" id="PF02875">
    <property type="entry name" value="Mur_ligase_C"/>
    <property type="match status" value="1"/>
</dbReference>
<dbReference type="Pfam" id="PF08245">
    <property type="entry name" value="Mur_ligase_M"/>
    <property type="match status" value="1"/>
</dbReference>
<dbReference type="SUPFAM" id="SSF51984">
    <property type="entry name" value="MurCD N-terminal domain"/>
    <property type="match status" value="1"/>
</dbReference>
<dbReference type="SUPFAM" id="SSF53623">
    <property type="entry name" value="MurD-like peptide ligases, catalytic domain"/>
    <property type="match status" value="1"/>
</dbReference>
<dbReference type="SUPFAM" id="SSF53244">
    <property type="entry name" value="MurD-like peptide ligases, peptide-binding domain"/>
    <property type="match status" value="1"/>
</dbReference>
<organism>
    <name type="scientific">Alkalilimnicola ehrlichii (strain ATCC BAA-1101 / DSM 17681 / MLHE-1)</name>
    <dbReference type="NCBI Taxonomy" id="187272"/>
    <lineage>
        <taxon>Bacteria</taxon>
        <taxon>Pseudomonadati</taxon>
        <taxon>Pseudomonadota</taxon>
        <taxon>Gammaproteobacteria</taxon>
        <taxon>Chromatiales</taxon>
        <taxon>Ectothiorhodospiraceae</taxon>
        <taxon>Alkalilimnicola</taxon>
    </lineage>
</organism>
<comment type="function">
    <text evidence="1">Cell wall formation.</text>
</comment>
<comment type="catalytic activity">
    <reaction evidence="1">
        <text>UDP-N-acetyl-alpha-D-muramate + L-alanine + ATP = UDP-N-acetyl-alpha-D-muramoyl-L-alanine + ADP + phosphate + H(+)</text>
        <dbReference type="Rhea" id="RHEA:23372"/>
        <dbReference type="ChEBI" id="CHEBI:15378"/>
        <dbReference type="ChEBI" id="CHEBI:30616"/>
        <dbReference type="ChEBI" id="CHEBI:43474"/>
        <dbReference type="ChEBI" id="CHEBI:57972"/>
        <dbReference type="ChEBI" id="CHEBI:70757"/>
        <dbReference type="ChEBI" id="CHEBI:83898"/>
        <dbReference type="ChEBI" id="CHEBI:456216"/>
        <dbReference type="EC" id="6.3.2.8"/>
    </reaction>
</comment>
<comment type="pathway">
    <text evidence="1">Cell wall biogenesis; peptidoglycan biosynthesis.</text>
</comment>
<comment type="subcellular location">
    <subcellularLocation>
        <location evidence="1">Cytoplasm</location>
    </subcellularLocation>
</comment>
<comment type="similarity">
    <text evidence="1">Belongs to the MurCDEF family.</text>
</comment>
<sequence length="479" mass="51633">MTDGDTSPAHTRPDAFGRVRHLHFVGIGGAGMGGIAEVLHNLGFTVTGSDLRENAITRRLAGLGVQVVFGHEADHVQGADAVVVSSAVQADNPEVQAAREYRIPVVRRAEMLAELMRFRYGIAVAGTHGKTTTTSLVASVLAEGGLDPTYVIGGRLNSSASHARLGSGRYLVAEADESDASFLHLKPMMAVVTNIDADHLETYGGDFDQLRHTFDEFLHHLPFYGLAVLCHDDPVLRDLGPEIARQVRSYGFAEDADLRAVDIEQSGRRTRFTVVDGEATFPVEVNLPGRHNVQNALAAIAVARELHVDVAAIQRALQRFQGIGRRFQDHGTLRFGDARVTLVDDYGHHPREIAATLRAVRDGWPGRRVLVVFQPHRYSRTRDLFEDFARVLSEADALLVTEVYAAGEPPVAGATGRGLCAAIRARGQVNPVFVETLEELQQVLPGVARDGDLVLTLGAGSIGGAAAELARRHGVEDGG</sequence>